<name>RS10_PHYAS</name>
<sequence>MKNKEREIIKIILRAYDHHLIDQAAKKIIDIVTKTGAQIEGPIPLPTKKEVFTVLRSPFVNKDSREQFERRTHKRLIQIVNPNNKTIESLMHINLPSAIDILLKK</sequence>
<proteinExistence type="inferred from homology"/>
<gene>
    <name evidence="1" type="primary">rpsJ</name>
    <name type="ordered locus">PA0588</name>
</gene>
<comment type="function">
    <text evidence="1">Involved in the binding of tRNA to the ribosomes.</text>
</comment>
<comment type="subunit">
    <text evidence="1">Part of the 30S ribosomal subunit.</text>
</comment>
<comment type="similarity">
    <text evidence="1">Belongs to the universal ribosomal protein uS10 family.</text>
</comment>
<feature type="chain" id="PRO_1000127162" description="Small ribosomal subunit protein uS10">
    <location>
        <begin position="1"/>
        <end position="105"/>
    </location>
</feature>
<protein>
    <recommendedName>
        <fullName evidence="1">Small ribosomal subunit protein uS10</fullName>
    </recommendedName>
    <alternativeName>
        <fullName evidence="2">30S ribosomal protein S10</fullName>
    </alternativeName>
</protein>
<organism>
    <name type="scientific">Phytoplasma australiense</name>
    <dbReference type="NCBI Taxonomy" id="59748"/>
    <lineage>
        <taxon>Bacteria</taxon>
        <taxon>Bacillati</taxon>
        <taxon>Mycoplasmatota</taxon>
        <taxon>Mollicutes</taxon>
        <taxon>Acholeplasmatales</taxon>
        <taxon>Acholeplasmataceae</taxon>
        <taxon>Candidatus Phytoplasma</taxon>
        <taxon>16SrXII (Stolbur group)</taxon>
    </lineage>
</organism>
<accession>B1VAE9</accession>
<evidence type="ECO:0000255" key="1">
    <source>
        <dbReference type="HAMAP-Rule" id="MF_00508"/>
    </source>
</evidence>
<evidence type="ECO:0000305" key="2"/>
<dbReference type="EMBL" id="AM422018">
    <property type="protein sequence ID" value="CAM11922.1"/>
    <property type="molecule type" value="Genomic_DNA"/>
</dbReference>
<dbReference type="SMR" id="B1VAE9"/>
<dbReference type="STRING" id="59748.PA0588"/>
<dbReference type="KEGG" id="pal:PA0588"/>
<dbReference type="eggNOG" id="COG0051">
    <property type="taxonomic scope" value="Bacteria"/>
</dbReference>
<dbReference type="Proteomes" id="UP000008323">
    <property type="component" value="Chromosome"/>
</dbReference>
<dbReference type="GO" id="GO:1990904">
    <property type="term" value="C:ribonucleoprotein complex"/>
    <property type="evidence" value="ECO:0007669"/>
    <property type="project" value="UniProtKB-KW"/>
</dbReference>
<dbReference type="GO" id="GO:0005840">
    <property type="term" value="C:ribosome"/>
    <property type="evidence" value="ECO:0007669"/>
    <property type="project" value="UniProtKB-KW"/>
</dbReference>
<dbReference type="GO" id="GO:0003735">
    <property type="term" value="F:structural constituent of ribosome"/>
    <property type="evidence" value="ECO:0007669"/>
    <property type="project" value="InterPro"/>
</dbReference>
<dbReference type="GO" id="GO:0000049">
    <property type="term" value="F:tRNA binding"/>
    <property type="evidence" value="ECO:0007669"/>
    <property type="project" value="UniProtKB-UniRule"/>
</dbReference>
<dbReference type="GO" id="GO:0006412">
    <property type="term" value="P:translation"/>
    <property type="evidence" value="ECO:0007669"/>
    <property type="project" value="UniProtKB-UniRule"/>
</dbReference>
<dbReference type="FunFam" id="3.30.70.600:FF:000003">
    <property type="entry name" value="30S ribosomal protein S10"/>
    <property type="match status" value="1"/>
</dbReference>
<dbReference type="Gene3D" id="3.30.70.600">
    <property type="entry name" value="Ribosomal protein S10 domain"/>
    <property type="match status" value="1"/>
</dbReference>
<dbReference type="HAMAP" id="MF_00508">
    <property type="entry name" value="Ribosomal_uS10"/>
    <property type="match status" value="1"/>
</dbReference>
<dbReference type="InterPro" id="IPR001848">
    <property type="entry name" value="Ribosomal_uS10"/>
</dbReference>
<dbReference type="InterPro" id="IPR018268">
    <property type="entry name" value="Ribosomal_uS10_CS"/>
</dbReference>
<dbReference type="InterPro" id="IPR027486">
    <property type="entry name" value="Ribosomal_uS10_dom"/>
</dbReference>
<dbReference type="InterPro" id="IPR036838">
    <property type="entry name" value="Ribosomal_uS10_dom_sf"/>
</dbReference>
<dbReference type="NCBIfam" id="NF001861">
    <property type="entry name" value="PRK00596.1"/>
    <property type="match status" value="1"/>
</dbReference>
<dbReference type="NCBIfam" id="TIGR01049">
    <property type="entry name" value="rpsJ_bact"/>
    <property type="match status" value="1"/>
</dbReference>
<dbReference type="PANTHER" id="PTHR11700">
    <property type="entry name" value="30S RIBOSOMAL PROTEIN S10 FAMILY MEMBER"/>
    <property type="match status" value="1"/>
</dbReference>
<dbReference type="Pfam" id="PF00338">
    <property type="entry name" value="Ribosomal_S10"/>
    <property type="match status" value="1"/>
</dbReference>
<dbReference type="PRINTS" id="PR00971">
    <property type="entry name" value="RIBOSOMALS10"/>
</dbReference>
<dbReference type="SMART" id="SM01403">
    <property type="entry name" value="Ribosomal_S10"/>
    <property type="match status" value="1"/>
</dbReference>
<dbReference type="SUPFAM" id="SSF54999">
    <property type="entry name" value="Ribosomal protein S10"/>
    <property type="match status" value="1"/>
</dbReference>
<dbReference type="PROSITE" id="PS00361">
    <property type="entry name" value="RIBOSOMAL_S10"/>
    <property type="match status" value="1"/>
</dbReference>
<keyword id="KW-1185">Reference proteome</keyword>
<keyword id="KW-0687">Ribonucleoprotein</keyword>
<keyword id="KW-0689">Ribosomal protein</keyword>
<reference key="1">
    <citation type="journal article" date="2008" name="J. Bacteriol.">
        <title>Comparative genome analysis of 'Candidatus Phytoplasma australiense' (subgroup tuf-Australia I; rp-A) and 'Ca. Phytoplasma asteris' strains OY-M and AY-WB.</title>
        <authorList>
            <person name="Tran-Nguyen L.T."/>
            <person name="Kube M."/>
            <person name="Schneider B."/>
            <person name="Reinhardt R."/>
            <person name="Gibb K.S."/>
        </authorList>
    </citation>
    <scope>NUCLEOTIDE SEQUENCE [LARGE SCALE GENOMIC DNA]</scope>
</reference>